<accession>C4ZR80</accession>
<protein>
    <recommendedName>
        <fullName evidence="1">Large ribosomal subunit protein bL9</fullName>
    </recommendedName>
    <alternativeName>
        <fullName evidence="2">50S ribosomal protein L9</fullName>
    </alternativeName>
</protein>
<reference key="1">
    <citation type="journal article" date="2009" name="J. Bacteriol.">
        <title>Genomic sequencing reveals regulatory mutations and recombinational events in the widely used MC4100 lineage of Escherichia coli K-12.</title>
        <authorList>
            <person name="Ferenci T."/>
            <person name="Zhou Z."/>
            <person name="Betteridge T."/>
            <person name="Ren Y."/>
            <person name="Liu Y."/>
            <person name="Feng L."/>
            <person name="Reeves P.R."/>
            <person name="Wang L."/>
        </authorList>
    </citation>
    <scope>NUCLEOTIDE SEQUENCE [LARGE SCALE GENOMIC DNA]</scope>
    <source>
        <strain>K12 / MC4100 / BW2952</strain>
    </source>
</reference>
<evidence type="ECO:0000255" key="1">
    <source>
        <dbReference type="HAMAP-Rule" id="MF_00503"/>
    </source>
</evidence>
<evidence type="ECO:0000305" key="2"/>
<organism>
    <name type="scientific">Escherichia coli (strain K12 / MC4100 / BW2952)</name>
    <dbReference type="NCBI Taxonomy" id="595496"/>
    <lineage>
        <taxon>Bacteria</taxon>
        <taxon>Pseudomonadati</taxon>
        <taxon>Pseudomonadota</taxon>
        <taxon>Gammaproteobacteria</taxon>
        <taxon>Enterobacterales</taxon>
        <taxon>Enterobacteriaceae</taxon>
        <taxon>Escherichia</taxon>
    </lineage>
</organism>
<keyword id="KW-0007">Acetylation</keyword>
<keyword id="KW-0687">Ribonucleoprotein</keyword>
<keyword id="KW-0689">Ribosomal protein</keyword>
<keyword id="KW-0694">RNA-binding</keyword>
<keyword id="KW-0699">rRNA-binding</keyword>
<sequence length="149" mass="15769">MQVILLDKVANLGSLGDQVNVKAGYARNFLVPQGKAVPATKKNIEFFEARRAELEAKLAEVLAAANARAEKINALETVTIASKAGDEGKLFGSIGTRDIADAVTAAGVEVAKSEVRLPNGVLRTTGEHEVSFQVHSEVFAKVIVNVVAE</sequence>
<proteinExistence type="inferred from homology"/>
<feature type="chain" id="PRO_1000206545" description="Large ribosomal subunit protein bL9">
    <location>
        <begin position="1"/>
        <end position="149"/>
    </location>
</feature>
<feature type="modified residue" description="N6-acetyllysine" evidence="1">
    <location>
        <position position="89"/>
    </location>
</feature>
<dbReference type="EMBL" id="CP001396">
    <property type="protein sequence ID" value="ACR61878.1"/>
    <property type="molecule type" value="Genomic_DNA"/>
</dbReference>
<dbReference type="RefSeq" id="WP_001196062.1">
    <property type="nucleotide sequence ID" value="NC_012759.1"/>
</dbReference>
<dbReference type="SMR" id="C4ZR80"/>
<dbReference type="GeneID" id="93777620"/>
<dbReference type="KEGG" id="ebw:BWG_3915"/>
<dbReference type="HOGENOM" id="CLU_078938_4_1_6"/>
<dbReference type="GO" id="GO:1990904">
    <property type="term" value="C:ribonucleoprotein complex"/>
    <property type="evidence" value="ECO:0007669"/>
    <property type="project" value="UniProtKB-KW"/>
</dbReference>
<dbReference type="GO" id="GO:0005840">
    <property type="term" value="C:ribosome"/>
    <property type="evidence" value="ECO:0007669"/>
    <property type="project" value="UniProtKB-KW"/>
</dbReference>
<dbReference type="GO" id="GO:0019843">
    <property type="term" value="F:rRNA binding"/>
    <property type="evidence" value="ECO:0007669"/>
    <property type="project" value="UniProtKB-UniRule"/>
</dbReference>
<dbReference type="GO" id="GO:0003735">
    <property type="term" value="F:structural constituent of ribosome"/>
    <property type="evidence" value="ECO:0007669"/>
    <property type="project" value="InterPro"/>
</dbReference>
<dbReference type="GO" id="GO:0006412">
    <property type="term" value="P:translation"/>
    <property type="evidence" value="ECO:0007669"/>
    <property type="project" value="UniProtKB-UniRule"/>
</dbReference>
<dbReference type="FunFam" id="3.10.430.100:FF:000001">
    <property type="entry name" value="50S ribosomal protein L9"/>
    <property type="match status" value="1"/>
</dbReference>
<dbReference type="FunFam" id="3.40.5.10:FF:000001">
    <property type="entry name" value="50S ribosomal protein L9"/>
    <property type="match status" value="1"/>
</dbReference>
<dbReference type="Gene3D" id="3.10.430.100">
    <property type="entry name" value="Ribosomal protein L9, C-terminal domain"/>
    <property type="match status" value="1"/>
</dbReference>
<dbReference type="Gene3D" id="3.40.5.10">
    <property type="entry name" value="Ribosomal protein L9, N-terminal domain"/>
    <property type="match status" value="1"/>
</dbReference>
<dbReference type="HAMAP" id="MF_00503">
    <property type="entry name" value="Ribosomal_bL9"/>
    <property type="match status" value="1"/>
</dbReference>
<dbReference type="InterPro" id="IPR000244">
    <property type="entry name" value="Ribosomal_bL9"/>
</dbReference>
<dbReference type="InterPro" id="IPR009027">
    <property type="entry name" value="Ribosomal_bL9/RNase_H1_N"/>
</dbReference>
<dbReference type="InterPro" id="IPR020594">
    <property type="entry name" value="Ribosomal_bL9_bac/chp"/>
</dbReference>
<dbReference type="InterPro" id="IPR020069">
    <property type="entry name" value="Ribosomal_bL9_C"/>
</dbReference>
<dbReference type="InterPro" id="IPR036791">
    <property type="entry name" value="Ribosomal_bL9_C_sf"/>
</dbReference>
<dbReference type="InterPro" id="IPR020070">
    <property type="entry name" value="Ribosomal_bL9_N"/>
</dbReference>
<dbReference type="InterPro" id="IPR036935">
    <property type="entry name" value="Ribosomal_bL9_N_sf"/>
</dbReference>
<dbReference type="NCBIfam" id="TIGR00158">
    <property type="entry name" value="L9"/>
    <property type="match status" value="1"/>
</dbReference>
<dbReference type="PANTHER" id="PTHR21368">
    <property type="entry name" value="50S RIBOSOMAL PROTEIN L9"/>
    <property type="match status" value="1"/>
</dbReference>
<dbReference type="Pfam" id="PF03948">
    <property type="entry name" value="Ribosomal_L9_C"/>
    <property type="match status" value="1"/>
</dbReference>
<dbReference type="Pfam" id="PF01281">
    <property type="entry name" value="Ribosomal_L9_N"/>
    <property type="match status" value="1"/>
</dbReference>
<dbReference type="SUPFAM" id="SSF55658">
    <property type="entry name" value="L9 N-domain-like"/>
    <property type="match status" value="1"/>
</dbReference>
<dbReference type="SUPFAM" id="SSF55653">
    <property type="entry name" value="Ribosomal protein L9 C-domain"/>
    <property type="match status" value="1"/>
</dbReference>
<dbReference type="PROSITE" id="PS00651">
    <property type="entry name" value="RIBOSOMAL_L9"/>
    <property type="match status" value="1"/>
</dbReference>
<gene>
    <name evidence="1" type="primary">rplI</name>
    <name type="ordered locus">BWG_3915</name>
</gene>
<name>RL9_ECOBW</name>
<comment type="function">
    <text evidence="1">Binds to the 23S rRNA.</text>
</comment>
<comment type="similarity">
    <text evidence="1">Belongs to the bacterial ribosomal protein bL9 family.</text>
</comment>